<accession>Q84ND9</accession>
<accession>Q9LJU4</accession>
<gene>
    <name type="primary">POLIB</name>
    <name type="ordered locus">At3g20540</name>
    <name type="ORF">K10D20.8</name>
</gene>
<organism>
    <name type="scientific">Arabidopsis thaliana</name>
    <name type="common">Mouse-ear cress</name>
    <dbReference type="NCBI Taxonomy" id="3702"/>
    <lineage>
        <taxon>Eukaryota</taxon>
        <taxon>Viridiplantae</taxon>
        <taxon>Streptophyta</taxon>
        <taxon>Embryophyta</taxon>
        <taxon>Tracheophyta</taxon>
        <taxon>Spermatophyta</taxon>
        <taxon>Magnoliopsida</taxon>
        <taxon>eudicotyledons</taxon>
        <taxon>Gunneridae</taxon>
        <taxon>Pentapetalae</taxon>
        <taxon>rosids</taxon>
        <taxon>malvids</taxon>
        <taxon>Brassicales</taxon>
        <taxon>Brassicaceae</taxon>
        <taxon>Camelineae</taxon>
        <taxon>Arabidopsis</taxon>
    </lineage>
</organism>
<dbReference type="EC" id="2.7.7.7"/>
<dbReference type="EMBL" id="AB211533">
    <property type="protein sequence ID" value="BAE10874.1"/>
    <property type="molecule type" value="mRNA"/>
</dbReference>
<dbReference type="EMBL" id="AY195962">
    <property type="protein sequence ID" value="AAO34128.1"/>
    <property type="molecule type" value="mRNA"/>
</dbReference>
<dbReference type="EMBL" id="AP000410">
    <property type="protein sequence ID" value="BAB01162.1"/>
    <property type="status" value="ALT_SEQ"/>
    <property type="molecule type" value="Genomic_DNA"/>
</dbReference>
<dbReference type="EMBL" id="CP002686">
    <property type="protein sequence ID" value="AEE76392.1"/>
    <property type="molecule type" value="Genomic_DNA"/>
</dbReference>
<dbReference type="EMBL" id="AK226811">
    <property type="protein sequence ID" value="BAE98907.1"/>
    <property type="molecule type" value="mRNA"/>
</dbReference>
<dbReference type="RefSeq" id="NP_188690.3">
    <molecule id="Q84ND9-1"/>
    <property type="nucleotide sequence ID" value="NM_112946.5"/>
</dbReference>
<dbReference type="SMR" id="Q84ND9"/>
<dbReference type="FunCoup" id="Q84ND9">
    <property type="interactions" value="229"/>
</dbReference>
<dbReference type="STRING" id="3702.Q84ND9"/>
<dbReference type="iPTMnet" id="Q84ND9"/>
<dbReference type="PaxDb" id="3702-AT3G20540.2"/>
<dbReference type="ProteomicsDB" id="226311">
    <molecule id="Q84ND9-1"/>
</dbReference>
<dbReference type="EnsemblPlants" id="AT3G20540.1">
    <molecule id="Q84ND9-1"/>
    <property type="protein sequence ID" value="AT3G20540.1"/>
    <property type="gene ID" value="AT3G20540"/>
</dbReference>
<dbReference type="GeneID" id="821600"/>
<dbReference type="Gramene" id="AT3G20540.1">
    <molecule id="Q84ND9-1"/>
    <property type="protein sequence ID" value="AT3G20540.1"/>
    <property type="gene ID" value="AT3G20540"/>
</dbReference>
<dbReference type="KEGG" id="ath:AT3G20540"/>
<dbReference type="Araport" id="AT3G20540"/>
<dbReference type="TAIR" id="AT3G20540">
    <property type="gene designation" value="POLGAMMA1"/>
</dbReference>
<dbReference type="eggNOG" id="KOG0950">
    <property type="taxonomic scope" value="Eukaryota"/>
</dbReference>
<dbReference type="HOGENOM" id="CLU_004638_0_0_1"/>
<dbReference type="InParanoid" id="Q84ND9"/>
<dbReference type="OMA" id="QSNAQEW"/>
<dbReference type="PhylomeDB" id="Q84ND9"/>
<dbReference type="BRENDA" id="4.2.99.B1">
    <property type="organism ID" value="399"/>
</dbReference>
<dbReference type="PRO" id="PR:Q84ND9"/>
<dbReference type="Proteomes" id="UP000006548">
    <property type="component" value="Chromosome 3"/>
</dbReference>
<dbReference type="ExpressionAtlas" id="Q84ND9">
    <property type="expression patterns" value="baseline and differential"/>
</dbReference>
<dbReference type="GO" id="GO:0009507">
    <property type="term" value="C:chloroplast"/>
    <property type="evidence" value="ECO:0000314"/>
    <property type="project" value="UniProtKB"/>
</dbReference>
<dbReference type="GO" id="GO:0005739">
    <property type="term" value="C:mitochondrion"/>
    <property type="evidence" value="ECO:0000314"/>
    <property type="project" value="UniProtKB"/>
</dbReference>
<dbReference type="GO" id="GO:0008408">
    <property type="term" value="F:3'-5' exonuclease activity"/>
    <property type="evidence" value="ECO:0007669"/>
    <property type="project" value="InterPro"/>
</dbReference>
<dbReference type="GO" id="GO:0003677">
    <property type="term" value="F:DNA binding"/>
    <property type="evidence" value="ECO:0007669"/>
    <property type="project" value="UniProtKB-KW"/>
</dbReference>
<dbReference type="GO" id="GO:0003887">
    <property type="term" value="F:DNA-directed DNA polymerase activity"/>
    <property type="evidence" value="ECO:0007669"/>
    <property type="project" value="UniProtKB-KW"/>
</dbReference>
<dbReference type="GO" id="GO:0006281">
    <property type="term" value="P:DNA repair"/>
    <property type="evidence" value="ECO:0007669"/>
    <property type="project" value="UniProtKB-KW"/>
</dbReference>
<dbReference type="GO" id="GO:0006264">
    <property type="term" value="P:mitochondrial DNA replication"/>
    <property type="evidence" value="ECO:0000315"/>
    <property type="project" value="UniProtKB"/>
</dbReference>
<dbReference type="GO" id="GO:0033259">
    <property type="term" value="P:plastid DNA replication"/>
    <property type="evidence" value="ECO:0000315"/>
    <property type="project" value="UniProtKB"/>
</dbReference>
<dbReference type="CDD" id="cd08640">
    <property type="entry name" value="DNA_pol_A_plastid_like"/>
    <property type="match status" value="1"/>
</dbReference>
<dbReference type="CDD" id="cd06139">
    <property type="entry name" value="DNA_polA_I_Ecoli_like_exo"/>
    <property type="match status" value="1"/>
</dbReference>
<dbReference type="FunFam" id="1.10.150.20:FF:000034">
    <property type="entry name" value="DNA polymerase I"/>
    <property type="match status" value="1"/>
</dbReference>
<dbReference type="FunFam" id="3.30.420.10:FF:000051">
    <property type="entry name" value="DNA polymerase I"/>
    <property type="match status" value="1"/>
</dbReference>
<dbReference type="Gene3D" id="3.30.70.370">
    <property type="match status" value="1"/>
</dbReference>
<dbReference type="Gene3D" id="1.10.150.20">
    <property type="entry name" value="5' to 3' exonuclease, C-terminal subdomain"/>
    <property type="match status" value="1"/>
</dbReference>
<dbReference type="Gene3D" id="3.30.420.10">
    <property type="entry name" value="Ribonuclease H-like superfamily/Ribonuclease H"/>
    <property type="match status" value="1"/>
</dbReference>
<dbReference type="InterPro" id="IPR002562">
    <property type="entry name" value="3'-5'_exonuclease_dom"/>
</dbReference>
<dbReference type="InterPro" id="IPR001098">
    <property type="entry name" value="DNA-dir_DNA_pol_A_palm_dom"/>
</dbReference>
<dbReference type="InterPro" id="IPR043502">
    <property type="entry name" value="DNA/RNA_pol_sf"/>
</dbReference>
<dbReference type="InterPro" id="IPR002298">
    <property type="entry name" value="DNA_polymerase_A"/>
</dbReference>
<dbReference type="InterPro" id="IPR012337">
    <property type="entry name" value="RNaseH-like_sf"/>
</dbReference>
<dbReference type="InterPro" id="IPR036397">
    <property type="entry name" value="RNaseH_sf"/>
</dbReference>
<dbReference type="PANTHER" id="PTHR10133">
    <property type="entry name" value="DNA POLYMERASE I"/>
    <property type="match status" value="1"/>
</dbReference>
<dbReference type="PANTHER" id="PTHR10133:SF27">
    <property type="entry name" value="DNA POLYMERASE NU"/>
    <property type="match status" value="1"/>
</dbReference>
<dbReference type="Pfam" id="PF00476">
    <property type="entry name" value="DNA_pol_A"/>
    <property type="match status" value="2"/>
</dbReference>
<dbReference type="Pfam" id="PF01612">
    <property type="entry name" value="DNA_pol_A_exo1"/>
    <property type="match status" value="1"/>
</dbReference>
<dbReference type="PRINTS" id="PR00868">
    <property type="entry name" value="DNAPOLI"/>
</dbReference>
<dbReference type="SMART" id="SM00482">
    <property type="entry name" value="POLAc"/>
    <property type="match status" value="1"/>
</dbReference>
<dbReference type="SUPFAM" id="SSF56672">
    <property type="entry name" value="DNA/RNA polymerases"/>
    <property type="match status" value="1"/>
</dbReference>
<dbReference type="SUPFAM" id="SSF53098">
    <property type="entry name" value="Ribonuclease H-like"/>
    <property type="match status" value="1"/>
</dbReference>
<reference key="1">
    <citation type="journal article" date="2005" name="Biochem. Biophys. Res. Commun.">
        <title>Plastid DNA polymerases from higher plants, Arabidopsis thaliana.</title>
        <authorList>
            <person name="Mori Y."/>
            <person name="Kimura S."/>
            <person name="Saotome A."/>
            <person name="Kasai N."/>
            <person name="Sakaguchi N."/>
            <person name="Uchiyama Y."/>
            <person name="Ishibashi T."/>
            <person name="Yamamoto T."/>
            <person name="Chiku H."/>
            <person name="Sakaguchi K."/>
        </authorList>
    </citation>
    <scope>NUCLEOTIDE SEQUENCE [MRNA]</scope>
    <scope>SUBCELLULAR LOCATION</scope>
    <scope>TISSUE SPECIFICITY</scope>
</reference>
<reference key="2">
    <citation type="submission" date="2002-12" db="EMBL/GenBank/DDBJ databases">
        <title>Nuclear genes encoding mitochondrial proteins for DNA and RNA metabolism are clustered in the Arabidopsis genome.</title>
        <authorList>
            <person name="Elo A."/>
            <person name="Lyznik A.M."/>
            <person name="Gonzalez D.O."/>
            <person name="Kachman S.D."/>
            <person name="Mackenzie S.A."/>
        </authorList>
    </citation>
    <scope>NUCLEOTIDE SEQUENCE [MRNA]</scope>
    <source>
        <strain>cv. Columbia</strain>
    </source>
</reference>
<reference key="3">
    <citation type="journal article" date="2000" name="DNA Res.">
        <title>Structural analysis of Arabidopsis thaliana chromosome 3. II. Sequence features of the 4,251,695 bp regions covered by 90 P1, TAC and BAC clones.</title>
        <authorList>
            <person name="Kaneko T."/>
            <person name="Katoh T."/>
            <person name="Sato S."/>
            <person name="Nakamura Y."/>
            <person name="Asamizu E."/>
            <person name="Tabata S."/>
        </authorList>
    </citation>
    <scope>NUCLEOTIDE SEQUENCE [LARGE SCALE GENOMIC DNA]</scope>
    <source>
        <strain>cv. Columbia</strain>
    </source>
</reference>
<reference key="4">
    <citation type="journal article" date="2017" name="Plant J.">
        <title>Araport11: a complete reannotation of the Arabidopsis thaliana reference genome.</title>
        <authorList>
            <person name="Cheng C.Y."/>
            <person name="Krishnakumar V."/>
            <person name="Chan A.P."/>
            <person name="Thibaud-Nissen F."/>
            <person name="Schobel S."/>
            <person name="Town C.D."/>
        </authorList>
    </citation>
    <scope>GENOME REANNOTATION</scope>
    <source>
        <strain>cv. Columbia</strain>
    </source>
</reference>
<reference key="5">
    <citation type="submission" date="2006-07" db="EMBL/GenBank/DDBJ databases">
        <title>Large-scale analysis of RIKEN Arabidopsis full-length (RAFL) cDNAs.</title>
        <authorList>
            <person name="Totoki Y."/>
            <person name="Seki M."/>
            <person name="Ishida J."/>
            <person name="Nakajima M."/>
            <person name="Enju A."/>
            <person name="Kamiya A."/>
            <person name="Narusaka M."/>
            <person name="Shin-i T."/>
            <person name="Nakagawa M."/>
            <person name="Sakamoto N."/>
            <person name="Oishi K."/>
            <person name="Kohara Y."/>
            <person name="Kobayashi M."/>
            <person name="Toyoda A."/>
            <person name="Sakaki Y."/>
            <person name="Sakurai T."/>
            <person name="Iida K."/>
            <person name="Akiyama K."/>
            <person name="Satou M."/>
            <person name="Toyoda T."/>
            <person name="Konagaya A."/>
            <person name="Carninci P."/>
            <person name="Kawai J."/>
            <person name="Hayashizaki Y."/>
            <person name="Shinozaki K."/>
        </authorList>
    </citation>
    <scope>NUCLEOTIDE SEQUENCE [LARGE SCALE MRNA]</scope>
    <source>
        <strain>cv. Columbia</strain>
    </source>
</reference>
<reference key="6">
    <citation type="journal article" date="2003" name="Plant Cell">
        <title>Nuclear genes that encode mitochondrial proteins for DNA and RNA metabolism are clustered in the Arabidopsis genome.</title>
        <authorList>
            <person name="Elo A."/>
            <person name="Lyznik A."/>
            <person name="Gonzalez D.O."/>
            <person name="Kachman S.D."/>
            <person name="Mackenzie S.A."/>
        </authorList>
    </citation>
    <scope>SUBCELLULAR LOCATION</scope>
</reference>
<reference key="7">
    <citation type="journal article" date="2005" name="Plant Cell">
        <title>Dual-domain, dual-targeting organellar protein presequences in Arabidopsis can use non-AUG start codons.</title>
        <authorList>
            <person name="Christensen A.C."/>
            <person name="Lyznik A."/>
            <person name="Mohammed S."/>
            <person name="Elowsky C.G."/>
            <person name="Elo A."/>
            <person name="Yule R."/>
            <person name="Mackenzie S.A."/>
        </authorList>
    </citation>
    <scope>SUBCELLULAR LOCATION</scope>
</reference>
<reference key="8">
    <citation type="journal article" date="2011" name="Plant Physiol.">
        <title>Divergent roles for the two PolI-like organelle DNA polymerases of Arabidopsis.</title>
        <authorList>
            <person name="Parent J.S."/>
            <person name="Lepage E."/>
            <person name="Brisson N."/>
        </authorList>
    </citation>
    <scope>FUNCTION</scope>
    <scope>DISRUPTION PHENOTYPE</scope>
</reference>
<proteinExistence type="evidence at transcript level"/>
<feature type="transit peptide" description="Chloroplast and mitochondrion" evidence="2">
    <location>
        <begin position="1"/>
        <end position="55"/>
    </location>
</feature>
<feature type="chain" id="PRO_0000429310" description="DNA polymerase I B, chloroplastic/mitochondrial">
    <location>
        <begin position="56"/>
        <end position="1033"/>
    </location>
</feature>
<feature type="domain" description="3'-5' exonuclease">
    <location>
        <begin position="270"/>
        <end position="468"/>
    </location>
</feature>
<feature type="region of interest" description="Polymerase">
    <location>
        <begin position="700"/>
        <end position="1030"/>
    </location>
</feature>
<evidence type="ECO:0000250" key="1"/>
<evidence type="ECO:0000255" key="2"/>
<evidence type="ECO:0000269" key="3">
    <source>
    </source>
</evidence>
<evidence type="ECO:0000269" key="4">
    <source>
    </source>
</evidence>
<evidence type="ECO:0000305" key="5"/>
<keyword id="KW-0025">Alternative splicing</keyword>
<keyword id="KW-0150">Chloroplast</keyword>
<keyword id="KW-0227">DNA damage</keyword>
<keyword id="KW-0234">DNA repair</keyword>
<keyword id="KW-0235">DNA replication</keyword>
<keyword id="KW-0238">DNA-binding</keyword>
<keyword id="KW-0239">DNA-directed DNA polymerase</keyword>
<keyword id="KW-0269">Exonuclease</keyword>
<keyword id="KW-0378">Hydrolase</keyword>
<keyword id="KW-0496">Mitochondrion</keyword>
<keyword id="KW-0540">Nuclease</keyword>
<keyword id="KW-0548">Nucleotidyltransferase</keyword>
<keyword id="KW-0934">Plastid</keyword>
<keyword id="KW-1185">Reference proteome</keyword>
<keyword id="KW-0808">Transferase</keyword>
<keyword id="KW-0809">Transit peptide</keyword>
<protein>
    <recommendedName>
        <fullName>DNA polymerase I B, chloroplastic/mitochondrial</fullName>
        <ecNumber>2.7.7.7</ecNumber>
    </recommendedName>
    <alternativeName>
        <fullName>DNA polymerase PolI-like B</fullName>
        <shortName>AtPolI-like B</shortName>
    </alternativeName>
    <alternativeName>
        <fullName>Polymerase gamma 1</fullName>
        <shortName>POLGAMMA1</shortName>
    </alternativeName>
</protein>
<name>POLIB_ARATH</name>
<sequence>MGVSLRHLSPSSFWVSRRPRVSSSILSFLVPRRRILCTRKVAIIKGNAGYSTATDCGGSHGFHHSGHQRSSSVEFSGEWKLNLGSKTARMVPPTVKQAGAVSAWREEVNNKLRGRNREYANNQDDAFGNGSYILKGFVPKIDDVHSYGNGQNFDYNLKPGTDITTLGRELNGFMQTNSIRGSVVALPSKDIEVGETTDVTLKPLNSDTTLDNASYKKTATISKVEKCTNLSQVRANLKKIYNRVRVVDNVSSAKETVALLMNQYRNLVHACDTEVSRIDVKTETPVDHGEMICFSIYCGSEADFGDGKSCIWVDVLGENGRDILAEFKPFFEDSSIKKVWHNYSFDNHIIRNYGIKLSGFHGDTMHMARLWDSSRRISGGYSLEALTSDPKVLGGTETKEEAELFGKISMKKIFGKGKLKKDGSEGKLVIIPPVKELQMEDREAWISYSALDSISTLKLYESMKKQLQAKKWFLDGKLISKKNMFDFYQEYWQPFGELLAKMESEGMLVDRDYLAQIEIVAKAEQEIAVSRFRNWASKHCPDAKHMNVGSDTQLRQLFFGGISNSCNDEDLPYEKLFKVPNVDKVIEEGKKRATKFRNIKLHRISDRPLPTEKFTASGWPSVSGDTLKALAGKVSAEYDYMEGVLDTCLEENIGDDDCISLPDEVVETQHVNTSVESDTSAYGTAFDAFGGGESGKEACHAIAALCEVCSIDSLISNFILPLQGSNVSGKDGRVHCSLNINTETGRLSARRPNLQNQPALEKDRYKIRQAFIASPGNSLIVADYGQLELRILAHLASCESMKEAFIAGGDFHSRTAMNMYPHIREAVENGEVLLEWHPQPGQEKPPVPLLKDAFASERRKAKMLNFSIAYGKTAIGLSRDWKVSREEAQDTVNLWYNDRQEVRKWQELRKKEAIQKGYVLTLLGRARKFPEYRSRAQKNHIERAAINTPVQGSAADVAMCAMLEISNNQRLKELGWKLLLQVHDEVILEGPSESAENAKDIVVNCMSEPFNGKNILSVDLSVDAKCAQNWYAGK</sequence>
<comment type="function">
    <text evidence="1 4">In addition to polymerase activity, this DNA polymerase exhibits 5'-3' exonuclease activity (By similarity). Required for DNA replication and accumulation in plastids and mitochondria.</text>
</comment>
<comment type="catalytic activity">
    <reaction>
        <text>DNA(n) + a 2'-deoxyribonucleoside 5'-triphosphate = DNA(n+1) + diphosphate</text>
        <dbReference type="Rhea" id="RHEA:22508"/>
        <dbReference type="Rhea" id="RHEA-COMP:17339"/>
        <dbReference type="Rhea" id="RHEA-COMP:17340"/>
        <dbReference type="ChEBI" id="CHEBI:33019"/>
        <dbReference type="ChEBI" id="CHEBI:61560"/>
        <dbReference type="ChEBI" id="CHEBI:173112"/>
        <dbReference type="EC" id="2.7.7.7"/>
    </reaction>
</comment>
<comment type="activity regulation">
    <text evidence="1">Not inhibited by aphidicolin.</text>
</comment>
<comment type="subcellular location">
    <subcellularLocation>
        <location>Mitochondrion</location>
    </subcellularLocation>
    <subcellularLocation>
        <location>Plastid</location>
        <location>Chloroplast</location>
    </subcellularLocation>
</comment>
<comment type="alternative products">
    <event type="alternative splicing"/>
    <isoform>
        <id>Q84ND9-1</id>
        <name>1</name>
        <sequence type="displayed"/>
    </isoform>
    <text>A number of isoforms are produced. According EST sequences.</text>
</comment>
<comment type="tissue specificity">
    <text evidence="3">Expressed in shoot apical meristem.</text>
</comment>
<comment type="disruption phenotype">
    <text evidence="4">No visible phenotype under normal growth conditions, but mutant plants have reduced levels of DNA in both mitochondria and plastids. Double homozygous mutants polIa and polIb are sterile.</text>
</comment>
<comment type="similarity">
    <text evidence="5">Belongs to the DNA polymerase type-A family.</text>
</comment>
<comment type="sequence caution" evidence="5">
    <conflict type="erroneous gene model prediction">
        <sequence resource="EMBL-CDS" id="BAB01162"/>
    </conflict>
</comment>